<comment type="catalytic activity">
    <reaction evidence="1">
        <text>beta-D-fructose 1,6-bisphosphate + H2O = beta-D-fructose 6-phosphate + phosphate</text>
        <dbReference type="Rhea" id="RHEA:11064"/>
        <dbReference type="ChEBI" id="CHEBI:15377"/>
        <dbReference type="ChEBI" id="CHEBI:32966"/>
        <dbReference type="ChEBI" id="CHEBI:43474"/>
        <dbReference type="ChEBI" id="CHEBI:57634"/>
        <dbReference type="EC" id="3.1.3.11"/>
    </reaction>
</comment>
<comment type="cofactor">
    <cofactor evidence="1">
        <name>Mg(2+)</name>
        <dbReference type="ChEBI" id="CHEBI:18420"/>
    </cofactor>
    <text evidence="1">Binds 2 magnesium ions per subunit.</text>
</comment>
<comment type="pathway">
    <text evidence="1">Carbohydrate biosynthesis; gluconeogenesis.</text>
</comment>
<comment type="subunit">
    <text evidence="1">Homotetramer.</text>
</comment>
<comment type="subcellular location">
    <subcellularLocation>
        <location evidence="1">Cytoplasm</location>
    </subcellularLocation>
</comment>
<comment type="similarity">
    <text evidence="1">Belongs to the FBPase class 1 family.</text>
</comment>
<dbReference type="EC" id="3.1.3.11" evidence="1"/>
<dbReference type="EMBL" id="BX936398">
    <property type="protein sequence ID" value="CAH19696.1"/>
    <property type="molecule type" value="Genomic_DNA"/>
</dbReference>
<dbReference type="RefSeq" id="WP_011191626.1">
    <property type="nucleotide sequence ID" value="NZ_CP009712.1"/>
</dbReference>
<dbReference type="SMR" id="Q66F84"/>
<dbReference type="GeneID" id="96663958"/>
<dbReference type="KEGG" id="ypo:BZ17_2109"/>
<dbReference type="KEGG" id="yps:YPTB0456"/>
<dbReference type="PATRIC" id="fig|273123.14.peg.2236"/>
<dbReference type="UniPathway" id="UPA00138"/>
<dbReference type="Proteomes" id="UP000001011">
    <property type="component" value="Chromosome"/>
</dbReference>
<dbReference type="GO" id="GO:0005829">
    <property type="term" value="C:cytosol"/>
    <property type="evidence" value="ECO:0007669"/>
    <property type="project" value="TreeGrafter"/>
</dbReference>
<dbReference type="GO" id="GO:0042132">
    <property type="term" value="F:fructose 1,6-bisphosphate 1-phosphatase activity"/>
    <property type="evidence" value="ECO:0007669"/>
    <property type="project" value="UniProtKB-UniRule"/>
</dbReference>
<dbReference type="GO" id="GO:0000287">
    <property type="term" value="F:magnesium ion binding"/>
    <property type="evidence" value="ECO:0007669"/>
    <property type="project" value="UniProtKB-UniRule"/>
</dbReference>
<dbReference type="GO" id="GO:0030388">
    <property type="term" value="P:fructose 1,6-bisphosphate metabolic process"/>
    <property type="evidence" value="ECO:0007669"/>
    <property type="project" value="TreeGrafter"/>
</dbReference>
<dbReference type="GO" id="GO:0006002">
    <property type="term" value="P:fructose 6-phosphate metabolic process"/>
    <property type="evidence" value="ECO:0007669"/>
    <property type="project" value="TreeGrafter"/>
</dbReference>
<dbReference type="GO" id="GO:0006000">
    <property type="term" value="P:fructose metabolic process"/>
    <property type="evidence" value="ECO:0007669"/>
    <property type="project" value="TreeGrafter"/>
</dbReference>
<dbReference type="GO" id="GO:0006094">
    <property type="term" value="P:gluconeogenesis"/>
    <property type="evidence" value="ECO:0007669"/>
    <property type="project" value="UniProtKB-UniRule"/>
</dbReference>
<dbReference type="GO" id="GO:0005986">
    <property type="term" value="P:sucrose biosynthetic process"/>
    <property type="evidence" value="ECO:0007669"/>
    <property type="project" value="TreeGrafter"/>
</dbReference>
<dbReference type="CDD" id="cd00354">
    <property type="entry name" value="FBPase"/>
    <property type="match status" value="1"/>
</dbReference>
<dbReference type="FunFam" id="3.30.540.10:FF:000002">
    <property type="entry name" value="Fructose-1,6-bisphosphatase class 1"/>
    <property type="match status" value="1"/>
</dbReference>
<dbReference type="FunFam" id="3.40.190.80:FF:000001">
    <property type="entry name" value="Fructose-1,6-bisphosphatase class 1"/>
    <property type="match status" value="1"/>
</dbReference>
<dbReference type="Gene3D" id="3.40.190.80">
    <property type="match status" value="1"/>
</dbReference>
<dbReference type="Gene3D" id="3.30.540.10">
    <property type="entry name" value="Fructose-1,6-Bisphosphatase, subunit A, domain 1"/>
    <property type="match status" value="1"/>
</dbReference>
<dbReference type="HAMAP" id="MF_01855">
    <property type="entry name" value="FBPase_class1"/>
    <property type="match status" value="1"/>
</dbReference>
<dbReference type="InterPro" id="IPR044015">
    <property type="entry name" value="FBPase_C_dom"/>
</dbReference>
<dbReference type="InterPro" id="IPR000146">
    <property type="entry name" value="FBPase_class-1"/>
</dbReference>
<dbReference type="InterPro" id="IPR033391">
    <property type="entry name" value="FBPase_N"/>
</dbReference>
<dbReference type="InterPro" id="IPR028343">
    <property type="entry name" value="FBPtase"/>
</dbReference>
<dbReference type="InterPro" id="IPR020548">
    <property type="entry name" value="Fructose_bisphosphatase_AS"/>
</dbReference>
<dbReference type="NCBIfam" id="NF006778">
    <property type="entry name" value="PRK09293.1-1"/>
    <property type="match status" value="1"/>
</dbReference>
<dbReference type="PANTHER" id="PTHR11556">
    <property type="entry name" value="FRUCTOSE-1,6-BISPHOSPHATASE-RELATED"/>
    <property type="match status" value="1"/>
</dbReference>
<dbReference type="PANTHER" id="PTHR11556:SF35">
    <property type="entry name" value="SEDOHEPTULOSE-1,7-BISPHOSPHATASE, CHLOROPLASTIC"/>
    <property type="match status" value="1"/>
</dbReference>
<dbReference type="Pfam" id="PF00316">
    <property type="entry name" value="FBPase"/>
    <property type="match status" value="1"/>
</dbReference>
<dbReference type="Pfam" id="PF18913">
    <property type="entry name" value="FBPase_C"/>
    <property type="match status" value="1"/>
</dbReference>
<dbReference type="PIRSF" id="PIRSF500210">
    <property type="entry name" value="FBPtase"/>
    <property type="match status" value="1"/>
</dbReference>
<dbReference type="PIRSF" id="PIRSF000904">
    <property type="entry name" value="FBPtase_SBPase"/>
    <property type="match status" value="1"/>
</dbReference>
<dbReference type="PRINTS" id="PR00115">
    <property type="entry name" value="F16BPHPHTASE"/>
</dbReference>
<dbReference type="SUPFAM" id="SSF56655">
    <property type="entry name" value="Carbohydrate phosphatase"/>
    <property type="match status" value="1"/>
</dbReference>
<dbReference type="PROSITE" id="PS00124">
    <property type="entry name" value="FBPASE"/>
    <property type="match status" value="1"/>
</dbReference>
<reference key="1">
    <citation type="journal article" date="2004" name="Proc. Natl. Acad. Sci. U.S.A.">
        <title>Insights into the evolution of Yersinia pestis through whole-genome comparison with Yersinia pseudotuberculosis.</title>
        <authorList>
            <person name="Chain P.S.G."/>
            <person name="Carniel E."/>
            <person name="Larimer F.W."/>
            <person name="Lamerdin J."/>
            <person name="Stoutland P.O."/>
            <person name="Regala W.M."/>
            <person name="Georgescu A.M."/>
            <person name="Vergez L.M."/>
            <person name="Land M.L."/>
            <person name="Motin V.L."/>
            <person name="Brubaker R.R."/>
            <person name="Fowler J."/>
            <person name="Hinnebusch J."/>
            <person name="Marceau M."/>
            <person name="Medigue C."/>
            <person name="Simonet M."/>
            <person name="Chenal-Francisque V."/>
            <person name="Souza B."/>
            <person name="Dacheux D."/>
            <person name="Elliott J.M."/>
            <person name="Derbise A."/>
            <person name="Hauser L.J."/>
            <person name="Garcia E."/>
        </authorList>
    </citation>
    <scope>NUCLEOTIDE SEQUENCE [LARGE SCALE GENOMIC DNA]</scope>
    <source>
        <strain>IP32953</strain>
    </source>
</reference>
<organism>
    <name type="scientific">Yersinia pseudotuberculosis serotype I (strain IP32953)</name>
    <dbReference type="NCBI Taxonomy" id="273123"/>
    <lineage>
        <taxon>Bacteria</taxon>
        <taxon>Pseudomonadati</taxon>
        <taxon>Pseudomonadota</taxon>
        <taxon>Gammaproteobacteria</taxon>
        <taxon>Enterobacterales</taxon>
        <taxon>Yersiniaceae</taxon>
        <taxon>Yersinia</taxon>
    </lineage>
</organism>
<keyword id="KW-0119">Carbohydrate metabolism</keyword>
<keyword id="KW-0963">Cytoplasm</keyword>
<keyword id="KW-0378">Hydrolase</keyword>
<keyword id="KW-0460">Magnesium</keyword>
<keyword id="KW-0479">Metal-binding</keyword>
<evidence type="ECO:0000255" key="1">
    <source>
        <dbReference type="HAMAP-Rule" id="MF_01855"/>
    </source>
</evidence>
<gene>
    <name evidence="1" type="primary">fbp</name>
    <name type="ordered locus">YPTB0456</name>
</gene>
<protein>
    <recommendedName>
        <fullName evidence="1">Fructose-1,6-bisphosphatase class 1</fullName>
        <shortName evidence="1">FBPase class 1</shortName>
        <ecNumber evidence="1">3.1.3.11</ecNumber>
    </recommendedName>
    <alternativeName>
        <fullName evidence="1">D-fructose-1,6-bisphosphate 1-phosphohydrolase class 1</fullName>
    </alternativeName>
</protein>
<name>F16PA_YERPS</name>
<proteinExistence type="inferred from homology"/>
<sequence length="337" mass="36966">MKTLGEFIVEKQLDFSHATGELTALLSAIKLGAKIIHRDINKAGLVDILGASGVSNIQGEDQMKLDLFANEKLKAALKARGEVAGIASEEEDDIVIFDGGRAENAKYVVLMDPLDGSSNIDVNVSVGTIFSIYRRITPFGTPITEEDFLQPGTKQVAAGYVVYGSSTMLVYTTGYGVHAFTYDPSLGVFCLSHEKVRYPATGCMYSINEGNYIKFPLGVKKYIKYCQEQDEATKRPYTSRYIGSLVADFHRNLLKGGIYIYPSTASHPQGKLRLLYECNPMAFLAEQAGGKATDGVNRILDIVPEKLHQRAPFFVGTKSMVEDAEGFIAKFPDEEAK</sequence>
<feature type="chain" id="PRO_0000364764" description="Fructose-1,6-bisphosphatase class 1">
    <location>
        <begin position="1"/>
        <end position="337"/>
    </location>
</feature>
<feature type="binding site" evidence="1">
    <location>
        <position position="89"/>
    </location>
    <ligand>
        <name>Mg(2+)</name>
        <dbReference type="ChEBI" id="CHEBI:18420"/>
        <label>1</label>
    </ligand>
</feature>
<feature type="binding site" evidence="1">
    <location>
        <position position="112"/>
    </location>
    <ligand>
        <name>Mg(2+)</name>
        <dbReference type="ChEBI" id="CHEBI:18420"/>
        <label>1</label>
    </ligand>
</feature>
<feature type="binding site" evidence="1">
    <location>
        <position position="112"/>
    </location>
    <ligand>
        <name>Mg(2+)</name>
        <dbReference type="ChEBI" id="CHEBI:18420"/>
        <label>2</label>
    </ligand>
</feature>
<feature type="binding site" evidence="1">
    <location>
        <position position="114"/>
    </location>
    <ligand>
        <name>Mg(2+)</name>
        <dbReference type="ChEBI" id="CHEBI:18420"/>
        <label>1</label>
    </ligand>
</feature>
<feature type="binding site" evidence="1">
    <location>
        <begin position="115"/>
        <end position="118"/>
    </location>
    <ligand>
        <name>substrate</name>
    </ligand>
</feature>
<feature type="binding site" evidence="1">
    <location>
        <position position="115"/>
    </location>
    <ligand>
        <name>Mg(2+)</name>
        <dbReference type="ChEBI" id="CHEBI:18420"/>
        <label>2</label>
    </ligand>
</feature>
<feature type="binding site" evidence="1">
    <location>
        <position position="208"/>
    </location>
    <ligand>
        <name>substrate</name>
    </ligand>
</feature>
<feature type="binding site" evidence="1">
    <location>
        <position position="241"/>
    </location>
    <ligand>
        <name>substrate</name>
    </ligand>
</feature>
<feature type="binding site" evidence="1">
    <location>
        <position position="271"/>
    </location>
    <ligand>
        <name>substrate</name>
    </ligand>
</feature>
<feature type="binding site" evidence="1">
    <location>
        <position position="277"/>
    </location>
    <ligand>
        <name>Mg(2+)</name>
        <dbReference type="ChEBI" id="CHEBI:18420"/>
        <label>2</label>
    </ligand>
</feature>
<accession>Q66F84</accession>